<comment type="function">
    <text evidence="1 8">PKC is activated by diacylglycerol which in turn phosphorylates a range of cellular proteins (By similarity). PKC also serves as the receptor for phorbol esters, a class of tumor promoters (By similarity). Acts in a hh-signaling pathway which regulates the Duox-dependent gut immune response to bacterial uracil; required for the activation of Cad99C and consequently Cad99C-dependent endosome formation, which is essential for the Duox-dependent production of reactive oxygen species (ROS) in response to intestinal bacterial infection (PubMed:25639794).</text>
</comment>
<comment type="catalytic activity">
    <reaction>
        <text>L-seryl-[protein] + ATP = O-phospho-L-seryl-[protein] + ADP + H(+)</text>
        <dbReference type="Rhea" id="RHEA:17989"/>
        <dbReference type="Rhea" id="RHEA-COMP:9863"/>
        <dbReference type="Rhea" id="RHEA-COMP:11604"/>
        <dbReference type="ChEBI" id="CHEBI:15378"/>
        <dbReference type="ChEBI" id="CHEBI:29999"/>
        <dbReference type="ChEBI" id="CHEBI:30616"/>
        <dbReference type="ChEBI" id="CHEBI:83421"/>
        <dbReference type="ChEBI" id="CHEBI:456216"/>
        <dbReference type="EC" id="2.7.11.13"/>
    </reaction>
</comment>
<comment type="catalytic activity">
    <reaction>
        <text>L-threonyl-[protein] + ATP = O-phospho-L-threonyl-[protein] + ADP + H(+)</text>
        <dbReference type="Rhea" id="RHEA:46608"/>
        <dbReference type="Rhea" id="RHEA-COMP:11060"/>
        <dbReference type="Rhea" id="RHEA-COMP:11605"/>
        <dbReference type="ChEBI" id="CHEBI:15378"/>
        <dbReference type="ChEBI" id="CHEBI:30013"/>
        <dbReference type="ChEBI" id="CHEBI:30616"/>
        <dbReference type="ChEBI" id="CHEBI:61977"/>
        <dbReference type="ChEBI" id="CHEBI:456216"/>
        <dbReference type="EC" id="2.7.11.13"/>
    </reaction>
</comment>
<comment type="cofactor">
    <cofactor evidence="2">
        <name>Ca(2+)</name>
        <dbReference type="ChEBI" id="CHEBI:29108"/>
    </cofactor>
    <text evidence="2">Binds 3 Ca(2+) ions per C2 domain.</text>
</comment>
<comment type="alternative products">
    <event type="alternative splicing"/>
    <isoform>
        <id>P05130-1</id>
        <name>Long</name>
        <sequence type="displayed"/>
    </isoform>
    <isoform>
        <id>P05130-2</id>
        <name>Short</name>
        <sequence type="described" ref="VSP_004743"/>
    </isoform>
</comment>
<comment type="tissue specificity">
    <text>Head neural tissue.</text>
</comment>
<comment type="induction">
    <text evidence="8">Up-regulated in the midgut epithelium in response to bacterial uracil.</text>
</comment>
<comment type="miscellaneous">
    <text>This is a calcium-activated, phospholipid-dependent, serine- and threonine-specific enzyme.</text>
</comment>
<comment type="miscellaneous">
    <text>The sequence shown is that of Oregon-R.</text>
</comment>
<comment type="similarity">
    <text evidence="10">Belongs to the protein kinase superfamily. AGC Ser/Thr protein kinase family. PKC subfamily.</text>
</comment>
<accession>P05130</accession>
<accession>Q9V7V6</accession>
<accession>Q9V7V7</accession>
<protein>
    <recommendedName>
        <fullName>Protein kinase C, brain isozyme</fullName>
        <shortName>PKC</shortName>
        <ecNumber>2.7.11.13</ecNumber>
    </recommendedName>
    <alternativeName>
        <fullName>dPKC53E(BR)</fullName>
    </alternativeName>
</protein>
<dbReference type="EC" id="2.7.11.13"/>
<dbReference type="EMBL" id="X05076">
    <property type="protein sequence ID" value="CAA28736.1"/>
    <property type="molecule type" value="mRNA"/>
</dbReference>
<dbReference type="EMBL" id="X05279">
    <property type="protein sequence ID" value="CAA28890.2"/>
    <property type="molecule type" value="Genomic_DNA"/>
</dbReference>
<dbReference type="EMBL" id="X05280">
    <property type="protein sequence ID" value="CAA28890.2"/>
    <property type="status" value="JOINED"/>
    <property type="molecule type" value="Genomic_DNA"/>
</dbReference>
<dbReference type="EMBL" id="X05281">
    <property type="protein sequence ID" value="CAA28890.2"/>
    <property type="status" value="JOINED"/>
    <property type="molecule type" value="Genomic_DNA"/>
</dbReference>
<dbReference type="EMBL" id="X05282">
    <property type="protein sequence ID" value="CAA28890.2"/>
    <property type="status" value="JOINED"/>
    <property type="molecule type" value="Genomic_DNA"/>
</dbReference>
<dbReference type="EMBL" id="X05283">
    <property type="protein sequence ID" value="CAA28890.2"/>
    <property type="status" value="JOINED"/>
    <property type="molecule type" value="Genomic_DNA"/>
</dbReference>
<dbReference type="EMBL" id="AE013599">
    <property type="protein sequence ID" value="AAF57932.1"/>
    <property type="molecule type" value="Genomic_DNA"/>
</dbReference>
<dbReference type="EMBL" id="AE013599">
    <property type="protein sequence ID" value="AAF57933.1"/>
    <property type="molecule type" value="Genomic_DNA"/>
</dbReference>
<dbReference type="EMBL" id="AY095003">
    <property type="protein sequence ID" value="AAM11331.1"/>
    <property type="molecule type" value="mRNA"/>
</dbReference>
<dbReference type="PIR" id="A32545">
    <property type="entry name" value="A32545"/>
</dbReference>
<dbReference type="RefSeq" id="NP_001261035.1">
    <molecule id="P05130-2"/>
    <property type="nucleotide sequence ID" value="NM_001274106.1"/>
</dbReference>
<dbReference type="RefSeq" id="NP_476682.1">
    <molecule id="P05130-2"/>
    <property type="nucleotide sequence ID" value="NM_057334.3"/>
</dbReference>
<dbReference type="RefSeq" id="NP_725626.1">
    <molecule id="P05130-1"/>
    <property type="nucleotide sequence ID" value="NM_166201.3"/>
</dbReference>
<dbReference type="SMR" id="P05130"/>
<dbReference type="BioGRID" id="71309">
    <property type="interactions" value="4"/>
</dbReference>
<dbReference type="FunCoup" id="P05130">
    <property type="interactions" value="499"/>
</dbReference>
<dbReference type="IntAct" id="P05130">
    <property type="interactions" value="6"/>
</dbReference>
<dbReference type="STRING" id="7227.FBpp0086197"/>
<dbReference type="PaxDb" id="7227-FBpp0086197"/>
<dbReference type="EnsemblMetazoa" id="FBtr0087048">
    <molecule id="P05130-1"/>
    <property type="protein sequence ID" value="FBpp0086197"/>
    <property type="gene ID" value="FBgn0003091"/>
</dbReference>
<dbReference type="EnsemblMetazoa" id="FBtr0087049">
    <molecule id="P05130-2"/>
    <property type="protein sequence ID" value="FBpp0086198"/>
    <property type="gene ID" value="FBgn0003091"/>
</dbReference>
<dbReference type="EnsemblMetazoa" id="FBtr0331960">
    <molecule id="P05130-2"/>
    <property type="protein sequence ID" value="FBpp0304291"/>
    <property type="gene ID" value="FBgn0003091"/>
</dbReference>
<dbReference type="GeneID" id="48311"/>
<dbReference type="KEGG" id="dme:Dmel_CG6622"/>
<dbReference type="AGR" id="FB:FBgn0003091"/>
<dbReference type="CTD" id="48311"/>
<dbReference type="FlyBase" id="FBgn0003091">
    <property type="gene designation" value="Pkc53E"/>
</dbReference>
<dbReference type="VEuPathDB" id="VectorBase:FBgn0003091"/>
<dbReference type="eggNOG" id="KOG0696">
    <property type="taxonomic scope" value="Eukaryota"/>
</dbReference>
<dbReference type="GeneTree" id="ENSGT00940000167637"/>
<dbReference type="InParanoid" id="P05130"/>
<dbReference type="OMA" id="VHEIKSH"/>
<dbReference type="OrthoDB" id="63267at2759"/>
<dbReference type="PhylomeDB" id="P05130"/>
<dbReference type="BRENDA" id="2.7.11.13">
    <property type="organism ID" value="1994"/>
</dbReference>
<dbReference type="Reactome" id="R-DME-111933">
    <property type="pathway name" value="Calmodulin induced events"/>
</dbReference>
<dbReference type="Reactome" id="R-DME-114516">
    <property type="pathway name" value="Disinhibition of SNARE formation"/>
</dbReference>
<dbReference type="Reactome" id="R-DME-1169091">
    <property type="pathway name" value="Activation of NF-kappaB in B cells"/>
</dbReference>
<dbReference type="Reactome" id="R-DME-1250196">
    <property type="pathway name" value="SHC1 events in ERBB2 signaling"/>
</dbReference>
<dbReference type="Reactome" id="R-DME-1433559">
    <property type="pathway name" value="Regulation of KIT signaling"/>
</dbReference>
<dbReference type="Reactome" id="R-DME-2179392">
    <property type="pathway name" value="EGFR Transactivation by Gastrin"/>
</dbReference>
<dbReference type="Reactome" id="R-DME-3000170">
    <property type="pathway name" value="Syndecan interactions"/>
</dbReference>
<dbReference type="Reactome" id="R-DME-399997">
    <property type="pathway name" value="Acetylcholine regulates insulin secretion"/>
</dbReference>
<dbReference type="Reactome" id="R-DME-416993">
    <property type="pathway name" value="Trafficking of GluR2-containing AMPA receptors"/>
</dbReference>
<dbReference type="Reactome" id="R-DME-4419969">
    <property type="pathway name" value="Depolymerization of the Nuclear Lamina"/>
</dbReference>
<dbReference type="Reactome" id="R-DME-450520">
    <property type="pathway name" value="HuR (ELAVL1) binds and stabilizes mRNA"/>
</dbReference>
<dbReference type="Reactome" id="R-DME-5218921">
    <property type="pathway name" value="VEGFR2 mediated cell proliferation"/>
</dbReference>
<dbReference type="Reactome" id="R-DME-76005">
    <property type="pathway name" value="Response to elevated platelet cytosolic Ca2+"/>
</dbReference>
<dbReference type="SignaLink" id="P05130"/>
<dbReference type="BioGRID-ORCS" id="48311">
    <property type="hits" value="0 hits in 3 CRISPR screens"/>
</dbReference>
<dbReference type="GenomeRNAi" id="48311"/>
<dbReference type="PRO" id="PR:P05130"/>
<dbReference type="Proteomes" id="UP000000803">
    <property type="component" value="Chromosome 2R"/>
</dbReference>
<dbReference type="Bgee" id="FBgn0003091">
    <property type="expression patterns" value="Expressed in adult gamma Kenyon cell in brain and 234 other cell types or tissues"/>
</dbReference>
<dbReference type="ExpressionAtlas" id="P05130">
    <property type="expression patterns" value="baseline and differential"/>
</dbReference>
<dbReference type="GO" id="GO:0005886">
    <property type="term" value="C:plasma membrane"/>
    <property type="evidence" value="ECO:0000250"/>
    <property type="project" value="FlyBase"/>
</dbReference>
<dbReference type="GO" id="GO:0005524">
    <property type="term" value="F:ATP binding"/>
    <property type="evidence" value="ECO:0007669"/>
    <property type="project" value="UniProtKB-KW"/>
</dbReference>
<dbReference type="GO" id="GO:0004698">
    <property type="term" value="F:calcium,diacylglycerol-dependent serine/threonine kinase activity"/>
    <property type="evidence" value="ECO:0000250"/>
    <property type="project" value="FlyBase"/>
</dbReference>
<dbReference type="GO" id="GO:0106310">
    <property type="term" value="F:protein serine kinase activity"/>
    <property type="evidence" value="ECO:0007669"/>
    <property type="project" value="RHEA"/>
</dbReference>
<dbReference type="GO" id="GO:0004674">
    <property type="term" value="F:protein serine/threonine kinase activity"/>
    <property type="evidence" value="ECO:0000314"/>
    <property type="project" value="FlyBase"/>
</dbReference>
<dbReference type="GO" id="GO:0008270">
    <property type="term" value="F:zinc ion binding"/>
    <property type="evidence" value="ECO:0007669"/>
    <property type="project" value="UniProtKB-KW"/>
</dbReference>
<dbReference type="GO" id="GO:0035556">
    <property type="term" value="P:intracellular signal transduction"/>
    <property type="evidence" value="ECO:0000318"/>
    <property type="project" value="GO_Central"/>
</dbReference>
<dbReference type="GO" id="GO:2000370">
    <property type="term" value="P:positive regulation of clathrin-dependent endocytosis"/>
    <property type="evidence" value="ECO:0000316"/>
    <property type="project" value="FlyBase"/>
</dbReference>
<dbReference type="GO" id="GO:0035206">
    <property type="term" value="P:regulation of hemocyte proliferation"/>
    <property type="evidence" value="ECO:0000315"/>
    <property type="project" value="FlyBase"/>
</dbReference>
<dbReference type="CDD" id="cd20833">
    <property type="entry name" value="C1_cPKC_rpt1"/>
    <property type="match status" value="1"/>
</dbReference>
<dbReference type="CDD" id="cd20836">
    <property type="entry name" value="C1_cPKC_rpt2"/>
    <property type="match status" value="1"/>
</dbReference>
<dbReference type="CDD" id="cd04026">
    <property type="entry name" value="C2_PKC_alpha_gamma"/>
    <property type="match status" value="1"/>
</dbReference>
<dbReference type="CDD" id="cd05587">
    <property type="entry name" value="STKc_cPKC"/>
    <property type="match status" value="1"/>
</dbReference>
<dbReference type="FunFam" id="2.60.40.150:FF:000012">
    <property type="entry name" value="Kinase C alpha type"/>
    <property type="match status" value="1"/>
</dbReference>
<dbReference type="FunFam" id="1.10.510.10:FF:000023">
    <property type="entry name" value="Protein kinase C"/>
    <property type="match status" value="1"/>
</dbReference>
<dbReference type="FunFam" id="3.30.200.20:FF:000080">
    <property type="entry name" value="Protein kinase C"/>
    <property type="match status" value="1"/>
</dbReference>
<dbReference type="FunFam" id="3.30.60.20:FF:000006">
    <property type="entry name" value="Protein kinase C"/>
    <property type="match status" value="1"/>
</dbReference>
<dbReference type="FunFam" id="3.30.60.20:FF:000052">
    <property type="entry name" value="Protein kinase C"/>
    <property type="match status" value="1"/>
</dbReference>
<dbReference type="Gene3D" id="3.30.60.20">
    <property type="match status" value="2"/>
</dbReference>
<dbReference type="Gene3D" id="2.60.40.150">
    <property type="entry name" value="C2 domain"/>
    <property type="match status" value="1"/>
</dbReference>
<dbReference type="Gene3D" id="3.30.200.20">
    <property type="entry name" value="Phosphorylase Kinase, domain 1"/>
    <property type="match status" value="1"/>
</dbReference>
<dbReference type="Gene3D" id="1.10.510.10">
    <property type="entry name" value="Transferase(Phosphotransferase) domain 1"/>
    <property type="match status" value="1"/>
</dbReference>
<dbReference type="InterPro" id="IPR000961">
    <property type="entry name" value="AGC-kinase_C"/>
</dbReference>
<dbReference type="InterPro" id="IPR046349">
    <property type="entry name" value="C1-like_sf"/>
</dbReference>
<dbReference type="InterPro" id="IPR000008">
    <property type="entry name" value="C2_dom"/>
</dbReference>
<dbReference type="InterPro" id="IPR035892">
    <property type="entry name" value="C2_domain_sf"/>
</dbReference>
<dbReference type="InterPro" id="IPR020454">
    <property type="entry name" value="DAG/PE-bd"/>
</dbReference>
<dbReference type="InterPro" id="IPR011009">
    <property type="entry name" value="Kinase-like_dom_sf"/>
</dbReference>
<dbReference type="InterPro" id="IPR002219">
    <property type="entry name" value="PE/DAG-bd"/>
</dbReference>
<dbReference type="InterPro" id="IPR017892">
    <property type="entry name" value="Pkinase_C"/>
</dbReference>
<dbReference type="InterPro" id="IPR000719">
    <property type="entry name" value="Prot_kinase_dom"/>
</dbReference>
<dbReference type="InterPro" id="IPR017441">
    <property type="entry name" value="Protein_kinase_ATP_BS"/>
</dbReference>
<dbReference type="InterPro" id="IPR014375">
    <property type="entry name" value="Protein_kinase_C_a/b/g"/>
</dbReference>
<dbReference type="InterPro" id="IPR008271">
    <property type="entry name" value="Ser/Thr_kinase_AS"/>
</dbReference>
<dbReference type="PANTHER" id="PTHR24351">
    <property type="entry name" value="RIBOSOMAL PROTEIN S6 KINASE"/>
    <property type="match status" value="1"/>
</dbReference>
<dbReference type="Pfam" id="PF00130">
    <property type="entry name" value="C1_1"/>
    <property type="match status" value="2"/>
</dbReference>
<dbReference type="Pfam" id="PF00168">
    <property type="entry name" value="C2"/>
    <property type="match status" value="1"/>
</dbReference>
<dbReference type="Pfam" id="PF00069">
    <property type="entry name" value="Pkinase"/>
    <property type="match status" value="1"/>
</dbReference>
<dbReference type="Pfam" id="PF00433">
    <property type="entry name" value="Pkinase_C"/>
    <property type="match status" value="1"/>
</dbReference>
<dbReference type="PIRSF" id="PIRSF000550">
    <property type="entry name" value="PKC_alpha"/>
    <property type="match status" value="1"/>
</dbReference>
<dbReference type="PRINTS" id="PR00360">
    <property type="entry name" value="C2DOMAIN"/>
</dbReference>
<dbReference type="PRINTS" id="PR00008">
    <property type="entry name" value="DAGPEDOMAIN"/>
</dbReference>
<dbReference type="SMART" id="SM00109">
    <property type="entry name" value="C1"/>
    <property type="match status" value="2"/>
</dbReference>
<dbReference type="SMART" id="SM00239">
    <property type="entry name" value="C2"/>
    <property type="match status" value="1"/>
</dbReference>
<dbReference type="SMART" id="SM00133">
    <property type="entry name" value="S_TK_X"/>
    <property type="match status" value="1"/>
</dbReference>
<dbReference type="SMART" id="SM00220">
    <property type="entry name" value="S_TKc"/>
    <property type="match status" value="1"/>
</dbReference>
<dbReference type="SUPFAM" id="SSF49562">
    <property type="entry name" value="C2 domain (Calcium/lipid-binding domain, CaLB)"/>
    <property type="match status" value="1"/>
</dbReference>
<dbReference type="SUPFAM" id="SSF57889">
    <property type="entry name" value="Cysteine-rich domain"/>
    <property type="match status" value="2"/>
</dbReference>
<dbReference type="SUPFAM" id="SSF56112">
    <property type="entry name" value="Protein kinase-like (PK-like)"/>
    <property type="match status" value="1"/>
</dbReference>
<dbReference type="PROSITE" id="PS51285">
    <property type="entry name" value="AGC_KINASE_CTER"/>
    <property type="match status" value="1"/>
</dbReference>
<dbReference type="PROSITE" id="PS50004">
    <property type="entry name" value="C2"/>
    <property type="match status" value="1"/>
</dbReference>
<dbReference type="PROSITE" id="PS00107">
    <property type="entry name" value="PROTEIN_KINASE_ATP"/>
    <property type="match status" value="1"/>
</dbReference>
<dbReference type="PROSITE" id="PS50011">
    <property type="entry name" value="PROTEIN_KINASE_DOM"/>
    <property type="match status" value="1"/>
</dbReference>
<dbReference type="PROSITE" id="PS00108">
    <property type="entry name" value="PROTEIN_KINASE_ST"/>
    <property type="match status" value="1"/>
</dbReference>
<dbReference type="PROSITE" id="PS00479">
    <property type="entry name" value="ZF_DAG_PE_1"/>
    <property type="match status" value="1"/>
</dbReference>
<dbReference type="PROSITE" id="PS50081">
    <property type="entry name" value="ZF_DAG_PE_2"/>
    <property type="match status" value="2"/>
</dbReference>
<evidence type="ECO:0000250" key="1">
    <source>
        <dbReference type="UniProtKB" id="P34885"/>
    </source>
</evidence>
<evidence type="ECO:0000255" key="2">
    <source>
        <dbReference type="PROSITE-ProRule" id="PRU00041"/>
    </source>
</evidence>
<evidence type="ECO:0000255" key="3">
    <source>
        <dbReference type="PROSITE-ProRule" id="PRU00159"/>
    </source>
</evidence>
<evidence type="ECO:0000255" key="4">
    <source>
        <dbReference type="PROSITE-ProRule" id="PRU00226"/>
    </source>
</evidence>
<evidence type="ECO:0000255" key="5">
    <source>
        <dbReference type="PROSITE-ProRule" id="PRU00618"/>
    </source>
</evidence>
<evidence type="ECO:0000255" key="6">
    <source>
        <dbReference type="PROSITE-ProRule" id="PRU10027"/>
    </source>
</evidence>
<evidence type="ECO:0000256" key="7">
    <source>
        <dbReference type="SAM" id="MobiDB-lite"/>
    </source>
</evidence>
<evidence type="ECO:0000269" key="8">
    <source>
    </source>
</evidence>
<evidence type="ECO:0000303" key="9">
    <source>
    </source>
</evidence>
<evidence type="ECO:0000305" key="10"/>
<reference key="1">
    <citation type="journal article" date="1987" name="EMBO J.">
        <title>Structure and nucleotide sequence of a Drosophila melanogaster protein kinase C gene.</title>
        <authorList>
            <person name="Rosenthal A."/>
            <person name="Rhee L."/>
            <person name="Yadegari R."/>
            <person name="Paro R."/>
            <person name="Ullrich A."/>
            <person name="Goeddel D.V."/>
        </authorList>
    </citation>
    <scope>NUCLEOTIDE SEQUENCE [GENOMIC DNA / MRNA] (ISOFORM SHORT)</scope>
    <source>
        <strain>Canton-S</strain>
        <strain>Oregon-R</strain>
    </source>
</reference>
<reference key="2">
    <citation type="journal article" date="2000" name="Science">
        <title>The genome sequence of Drosophila melanogaster.</title>
        <authorList>
            <person name="Adams M.D."/>
            <person name="Celniker S.E."/>
            <person name="Holt R.A."/>
            <person name="Evans C.A."/>
            <person name="Gocayne J.D."/>
            <person name="Amanatides P.G."/>
            <person name="Scherer S.E."/>
            <person name="Li P.W."/>
            <person name="Hoskins R.A."/>
            <person name="Galle R.F."/>
            <person name="George R.A."/>
            <person name="Lewis S.E."/>
            <person name="Richards S."/>
            <person name="Ashburner M."/>
            <person name="Henderson S.N."/>
            <person name="Sutton G.G."/>
            <person name="Wortman J.R."/>
            <person name="Yandell M.D."/>
            <person name="Zhang Q."/>
            <person name="Chen L.X."/>
            <person name="Brandon R.C."/>
            <person name="Rogers Y.-H.C."/>
            <person name="Blazej R.G."/>
            <person name="Champe M."/>
            <person name="Pfeiffer B.D."/>
            <person name="Wan K.H."/>
            <person name="Doyle C."/>
            <person name="Baxter E.G."/>
            <person name="Helt G."/>
            <person name="Nelson C.R."/>
            <person name="Miklos G.L.G."/>
            <person name="Abril J.F."/>
            <person name="Agbayani A."/>
            <person name="An H.-J."/>
            <person name="Andrews-Pfannkoch C."/>
            <person name="Baldwin D."/>
            <person name="Ballew R.M."/>
            <person name="Basu A."/>
            <person name="Baxendale J."/>
            <person name="Bayraktaroglu L."/>
            <person name="Beasley E.M."/>
            <person name="Beeson K.Y."/>
            <person name="Benos P.V."/>
            <person name="Berman B.P."/>
            <person name="Bhandari D."/>
            <person name="Bolshakov S."/>
            <person name="Borkova D."/>
            <person name="Botchan M.R."/>
            <person name="Bouck J."/>
            <person name="Brokstein P."/>
            <person name="Brottier P."/>
            <person name="Burtis K.C."/>
            <person name="Busam D.A."/>
            <person name="Butler H."/>
            <person name="Cadieu E."/>
            <person name="Center A."/>
            <person name="Chandra I."/>
            <person name="Cherry J.M."/>
            <person name="Cawley S."/>
            <person name="Dahlke C."/>
            <person name="Davenport L.B."/>
            <person name="Davies P."/>
            <person name="de Pablos B."/>
            <person name="Delcher A."/>
            <person name="Deng Z."/>
            <person name="Mays A.D."/>
            <person name="Dew I."/>
            <person name="Dietz S.M."/>
            <person name="Dodson K."/>
            <person name="Doup L.E."/>
            <person name="Downes M."/>
            <person name="Dugan-Rocha S."/>
            <person name="Dunkov B.C."/>
            <person name="Dunn P."/>
            <person name="Durbin K.J."/>
            <person name="Evangelista C.C."/>
            <person name="Ferraz C."/>
            <person name="Ferriera S."/>
            <person name="Fleischmann W."/>
            <person name="Fosler C."/>
            <person name="Gabrielian A.E."/>
            <person name="Garg N.S."/>
            <person name="Gelbart W.M."/>
            <person name="Glasser K."/>
            <person name="Glodek A."/>
            <person name="Gong F."/>
            <person name="Gorrell J.H."/>
            <person name="Gu Z."/>
            <person name="Guan P."/>
            <person name="Harris M."/>
            <person name="Harris N.L."/>
            <person name="Harvey D.A."/>
            <person name="Heiman T.J."/>
            <person name="Hernandez J.R."/>
            <person name="Houck J."/>
            <person name="Hostin D."/>
            <person name="Houston K.A."/>
            <person name="Howland T.J."/>
            <person name="Wei M.-H."/>
            <person name="Ibegwam C."/>
            <person name="Jalali M."/>
            <person name="Kalush F."/>
            <person name="Karpen G.H."/>
            <person name="Ke Z."/>
            <person name="Kennison J.A."/>
            <person name="Ketchum K.A."/>
            <person name="Kimmel B.E."/>
            <person name="Kodira C.D."/>
            <person name="Kraft C.L."/>
            <person name="Kravitz S."/>
            <person name="Kulp D."/>
            <person name="Lai Z."/>
            <person name="Lasko P."/>
            <person name="Lei Y."/>
            <person name="Levitsky A.A."/>
            <person name="Li J.H."/>
            <person name="Li Z."/>
            <person name="Liang Y."/>
            <person name="Lin X."/>
            <person name="Liu X."/>
            <person name="Mattei B."/>
            <person name="McIntosh T.C."/>
            <person name="McLeod M.P."/>
            <person name="McPherson D."/>
            <person name="Merkulov G."/>
            <person name="Milshina N.V."/>
            <person name="Mobarry C."/>
            <person name="Morris J."/>
            <person name="Moshrefi A."/>
            <person name="Mount S.M."/>
            <person name="Moy M."/>
            <person name="Murphy B."/>
            <person name="Murphy L."/>
            <person name="Muzny D.M."/>
            <person name="Nelson D.L."/>
            <person name="Nelson D.R."/>
            <person name="Nelson K.A."/>
            <person name="Nixon K."/>
            <person name="Nusskern D.R."/>
            <person name="Pacleb J.M."/>
            <person name="Palazzolo M."/>
            <person name="Pittman G.S."/>
            <person name="Pan S."/>
            <person name="Pollard J."/>
            <person name="Puri V."/>
            <person name="Reese M.G."/>
            <person name="Reinert K."/>
            <person name="Remington K."/>
            <person name="Saunders R.D.C."/>
            <person name="Scheeler F."/>
            <person name="Shen H."/>
            <person name="Shue B.C."/>
            <person name="Siden-Kiamos I."/>
            <person name="Simpson M."/>
            <person name="Skupski M.P."/>
            <person name="Smith T.J."/>
            <person name="Spier E."/>
            <person name="Spradling A.C."/>
            <person name="Stapleton M."/>
            <person name="Strong R."/>
            <person name="Sun E."/>
            <person name="Svirskas R."/>
            <person name="Tector C."/>
            <person name="Turner R."/>
            <person name="Venter E."/>
            <person name="Wang A.H."/>
            <person name="Wang X."/>
            <person name="Wang Z.-Y."/>
            <person name="Wassarman D.A."/>
            <person name="Weinstock G.M."/>
            <person name="Weissenbach J."/>
            <person name="Williams S.M."/>
            <person name="Woodage T."/>
            <person name="Worley K.C."/>
            <person name="Wu D."/>
            <person name="Yang S."/>
            <person name="Yao Q.A."/>
            <person name="Ye J."/>
            <person name="Yeh R.-F."/>
            <person name="Zaveri J.S."/>
            <person name="Zhan M."/>
            <person name="Zhang G."/>
            <person name="Zhao Q."/>
            <person name="Zheng L."/>
            <person name="Zheng X.H."/>
            <person name="Zhong F.N."/>
            <person name="Zhong W."/>
            <person name="Zhou X."/>
            <person name="Zhu S.C."/>
            <person name="Zhu X."/>
            <person name="Smith H.O."/>
            <person name="Gibbs R.A."/>
            <person name="Myers E.W."/>
            <person name="Rubin G.M."/>
            <person name="Venter J.C."/>
        </authorList>
    </citation>
    <scope>NUCLEOTIDE SEQUENCE [LARGE SCALE GENOMIC DNA]</scope>
    <source>
        <strain>Berkeley</strain>
    </source>
</reference>
<reference key="3">
    <citation type="journal article" date="2002" name="Genome Biol.">
        <title>Annotation of the Drosophila melanogaster euchromatic genome: a systematic review.</title>
        <authorList>
            <person name="Misra S."/>
            <person name="Crosby M.A."/>
            <person name="Mungall C.J."/>
            <person name="Matthews B.B."/>
            <person name="Campbell K.S."/>
            <person name="Hradecky P."/>
            <person name="Huang Y."/>
            <person name="Kaminker J.S."/>
            <person name="Millburn G.H."/>
            <person name="Prochnik S.E."/>
            <person name="Smith C.D."/>
            <person name="Tupy J.L."/>
            <person name="Whitfield E.J."/>
            <person name="Bayraktaroglu L."/>
            <person name="Berman B.P."/>
            <person name="Bettencourt B.R."/>
            <person name="Celniker S.E."/>
            <person name="de Grey A.D.N.J."/>
            <person name="Drysdale R.A."/>
            <person name="Harris N.L."/>
            <person name="Richter J."/>
            <person name="Russo S."/>
            <person name="Schroeder A.J."/>
            <person name="Shu S.Q."/>
            <person name="Stapleton M."/>
            <person name="Yamada C."/>
            <person name="Ashburner M."/>
            <person name="Gelbart W.M."/>
            <person name="Rubin G.M."/>
            <person name="Lewis S.E."/>
        </authorList>
    </citation>
    <scope>GENOME REANNOTATION</scope>
    <source>
        <strain>Berkeley</strain>
    </source>
</reference>
<reference key="4">
    <citation type="submission" date="2002-04" db="EMBL/GenBank/DDBJ databases">
        <authorList>
            <person name="Stapleton M."/>
            <person name="Brokstein P."/>
            <person name="Hong L."/>
            <person name="Agbayani A."/>
            <person name="Carlson J.W."/>
            <person name="Champe M."/>
            <person name="Chavez C."/>
            <person name="Dorsett V."/>
            <person name="Dresnek D."/>
            <person name="Farfan D."/>
            <person name="Frise E."/>
            <person name="George R.A."/>
            <person name="Gonzalez M."/>
            <person name="Guarin H."/>
            <person name="Kronmiller B."/>
            <person name="Li P.W."/>
            <person name="Liao G."/>
            <person name="Miranda A."/>
            <person name="Mungall C.J."/>
            <person name="Nunoo J."/>
            <person name="Pacleb J.M."/>
            <person name="Paragas V."/>
            <person name="Park S."/>
            <person name="Patel S."/>
            <person name="Phouanenavong S."/>
            <person name="Wan K.H."/>
            <person name="Yu C."/>
            <person name="Lewis S.E."/>
            <person name="Rubin G.M."/>
            <person name="Celniker S.E."/>
        </authorList>
    </citation>
    <scope>NUCLEOTIDE SEQUENCE [LARGE SCALE MRNA] (ISOFORM LONG)</scope>
    <source>
        <strain>Berkeley</strain>
        <tissue>Ovary</tissue>
    </source>
</reference>
<reference key="5">
    <citation type="journal article" date="2015" name="Cell Host Microbe">
        <title>Bacterial uracil modulates Drosophila DUOX-dependent gut immunity via Hedgehog-induced signaling endosomes.</title>
        <authorList>
            <person name="Lee K.A."/>
            <person name="Kim B."/>
            <person name="Bhin J."/>
            <person name="Kim D.H."/>
            <person name="You H."/>
            <person name="Kim E.K."/>
            <person name="Kim S.H."/>
            <person name="Ryu J.H."/>
            <person name="Hwang D."/>
            <person name="Lee W.J."/>
        </authorList>
    </citation>
    <scope>FUNCTION</scope>
    <scope>INDUCTION BY BACTERIAL URACIL</scope>
</reference>
<feature type="chain" id="PRO_0000055730" description="Protein kinase C, brain isozyme">
    <location>
        <begin position="1"/>
        <end position="679"/>
    </location>
</feature>
<feature type="domain" description="C2" evidence="2">
    <location>
        <begin position="176"/>
        <end position="293"/>
    </location>
</feature>
<feature type="domain" description="Protein kinase" evidence="3">
    <location>
        <begin position="350"/>
        <end position="608"/>
    </location>
</feature>
<feature type="domain" description="AGC-kinase C-terminal" evidence="5">
    <location>
        <begin position="609"/>
        <end position="679"/>
    </location>
</feature>
<feature type="zinc finger region" description="Phorbol-ester/DAG-type 1" evidence="4">
    <location>
        <begin position="45"/>
        <end position="104"/>
    </location>
</feature>
<feature type="zinc finger region" description="Phorbol-ester/DAG-type 2" evidence="4">
    <location>
        <begin position="119"/>
        <end position="169"/>
    </location>
</feature>
<feature type="region of interest" description="Disordered" evidence="7">
    <location>
        <begin position="1"/>
        <end position="23"/>
    </location>
</feature>
<feature type="compositionally biased region" description="Polar residues" evidence="7">
    <location>
        <begin position="1"/>
        <end position="15"/>
    </location>
</feature>
<feature type="active site" description="Proton acceptor" evidence="3 6">
    <location>
        <position position="474"/>
    </location>
</feature>
<feature type="binding site" evidence="2">
    <location>
        <position position="205"/>
    </location>
    <ligand>
        <name>Ca(2+)</name>
        <dbReference type="ChEBI" id="CHEBI:29108"/>
        <label>1</label>
    </ligand>
</feature>
<feature type="binding site" evidence="2">
    <location>
        <position position="205"/>
    </location>
    <ligand>
        <name>Ca(2+)</name>
        <dbReference type="ChEBI" id="CHEBI:29108"/>
        <label>2</label>
    </ligand>
</feature>
<feature type="binding site" evidence="2">
    <location>
        <position position="211"/>
    </location>
    <ligand>
        <name>Ca(2+)</name>
        <dbReference type="ChEBI" id="CHEBI:29108"/>
        <label>1</label>
    </ligand>
</feature>
<feature type="binding site" evidence="2">
    <location>
        <position position="264"/>
    </location>
    <ligand>
        <name>Ca(2+)</name>
        <dbReference type="ChEBI" id="CHEBI:29108"/>
        <label>1</label>
    </ligand>
</feature>
<feature type="binding site" evidence="2">
    <location>
        <position position="264"/>
    </location>
    <ligand>
        <name>Ca(2+)</name>
        <dbReference type="ChEBI" id="CHEBI:29108"/>
        <label>2</label>
    </ligand>
</feature>
<feature type="binding site" evidence="2">
    <location>
        <position position="266"/>
    </location>
    <ligand>
        <name>Ca(2+)</name>
        <dbReference type="ChEBI" id="CHEBI:29108"/>
        <label>1</label>
    </ligand>
</feature>
<feature type="binding site" evidence="2">
    <location>
        <position position="266"/>
    </location>
    <ligand>
        <name>Ca(2+)</name>
        <dbReference type="ChEBI" id="CHEBI:29108"/>
        <label>2</label>
    </ligand>
</feature>
<feature type="binding site" evidence="2">
    <location>
        <position position="266"/>
    </location>
    <ligand>
        <name>Ca(2+)</name>
        <dbReference type="ChEBI" id="CHEBI:29108"/>
        <label>3</label>
    </ligand>
</feature>
<feature type="binding site" evidence="2">
    <location>
        <position position="269"/>
    </location>
    <ligand>
        <name>Ca(2+)</name>
        <dbReference type="ChEBI" id="CHEBI:29108"/>
        <label>3</label>
    </ligand>
</feature>
<feature type="binding site" evidence="2">
    <location>
        <position position="272"/>
    </location>
    <ligand>
        <name>Ca(2+)</name>
        <dbReference type="ChEBI" id="CHEBI:29108"/>
        <label>2</label>
    </ligand>
</feature>
<feature type="binding site" evidence="2">
    <location>
        <position position="272"/>
    </location>
    <ligand>
        <name>Ca(2+)</name>
        <dbReference type="ChEBI" id="CHEBI:29108"/>
        <label>3</label>
    </ligand>
</feature>
<feature type="binding site" evidence="3">
    <location>
        <begin position="356"/>
        <end position="364"/>
    </location>
    <ligand>
        <name>ATP</name>
        <dbReference type="ChEBI" id="CHEBI:30616"/>
    </ligand>
</feature>
<feature type="binding site" evidence="3">
    <location>
        <position position="379"/>
    </location>
    <ligand>
        <name>ATP</name>
        <dbReference type="ChEBI" id="CHEBI:30616"/>
    </ligand>
</feature>
<feature type="splice variant" id="VSP_004743" description="In isoform Short." evidence="9">
    <original>CGYQSGYAWMG</original>
    <variation>WG</variation>
    <location>
        <begin position="67"/>
        <end position="77"/>
    </location>
</feature>
<feature type="sequence variant">
    <original>M</original>
    <variation>I</variation>
    <location>
        <position position="437"/>
    </location>
</feature>
<feature type="sequence conflict" description="In Ref. 1; CAA28736/CAA28890." evidence="10" ref="1">
    <original>F</original>
    <variation>S</variation>
    <location>
        <position position="608"/>
    </location>
</feature>
<feature type="sequence conflict" description="In Ref. 1." evidence="10" ref="1">
    <original>DVSNFDKQFTSEKTD</original>
    <variation>MCPTLTSSSHQRKQT</variation>
    <location>
        <begin position="634"/>
        <end position="648"/>
    </location>
</feature>
<feature type="sequence conflict" description="In Ref. 1." evidence="10" ref="1">
    <location>
        <begin position="649"/>
        <end position="679"/>
    </location>
</feature>
<organism>
    <name type="scientific">Drosophila melanogaster</name>
    <name type="common">Fruit fly</name>
    <dbReference type="NCBI Taxonomy" id="7227"/>
    <lineage>
        <taxon>Eukaryota</taxon>
        <taxon>Metazoa</taxon>
        <taxon>Ecdysozoa</taxon>
        <taxon>Arthropoda</taxon>
        <taxon>Hexapoda</taxon>
        <taxon>Insecta</taxon>
        <taxon>Pterygota</taxon>
        <taxon>Neoptera</taxon>
        <taxon>Endopterygota</taxon>
        <taxon>Diptera</taxon>
        <taxon>Brachycera</taxon>
        <taxon>Muscomorpha</taxon>
        <taxon>Ephydroidea</taxon>
        <taxon>Drosophilidae</taxon>
        <taxon>Drosophila</taxon>
        <taxon>Sophophora</taxon>
    </lineage>
</organism>
<keyword id="KW-0025">Alternative splicing</keyword>
<keyword id="KW-0067">ATP-binding</keyword>
<keyword id="KW-0106">Calcium</keyword>
<keyword id="KW-0418">Kinase</keyword>
<keyword id="KW-0479">Metal-binding</keyword>
<keyword id="KW-0547">Nucleotide-binding</keyword>
<keyword id="KW-0597">Phosphoprotein</keyword>
<keyword id="KW-1185">Reference proteome</keyword>
<keyword id="KW-0677">Repeat</keyword>
<keyword id="KW-0723">Serine/threonine-protein kinase</keyword>
<keyword id="KW-0808">Transferase</keyword>
<keyword id="KW-0862">Zinc</keyword>
<keyword id="KW-0863">Zinc-finger</keyword>
<sequence>MSEGSDNNGDPQQQGAEGEAVGENKMKSRLRKGALKKKNVFNVKDHCFIARFFKQPTFCSHCKDFICGYQSGYAWMGFGKQGFQCQVCSYVVHKRCHEYVTFICPGKDKGIDSDSPKTQHNFEPFTYAGPTFCDHCGSLLYGIYHQGLKCSACDMNVHARCKENVPSLCGCDHTERRGRIYLEINVKENLLTVQIKEGRNLIPMDPNGLSDPYVKVKLIPDDKDQSKKKTRTIKACLNPVWNETLTYDLKPEDKDRRILIEVWDWDRTSRNDFMGALSFGISEIIKNPTNGWFKLLTQDEGEYYNVPCADDEQDLLKLKQKPSQKKPMVMRSDTNTHTSSKKDMIRATDFNFIKVLGKGSFGKVLLAERKGSEELYAIKILKKDVIIQDDDVECTMIEKRVLALGEKPPFLVQLHSCFQTMDRLFFVMEYVNGGDLMFQIQQFGKFKEPVAVFYAAEIAAGLFFLHTKGILYRDLKLDNVLLDADGHVKIADFGMCKENIVGDKTTKTFCGTPDYIAPEIILYQPYGKSVDWWAYGVLLYEMLVGQPPFDGEDEEELFAAITDHNVSYPKSLSKEAKEACKGFLTKQPNKRLGCGSSGEEDVRLHPFFRRIDWEKIENREVQPPFKPKIKHRKDVSNFDKQFTSEKTDLTPTDKVFMMNLDQSEFVGFSYMNPEYVFSP</sequence>
<gene>
    <name type="primary">Pkc53E</name>
    <name type="synonym">PKC1</name>
    <name type="ORF">CG6622</name>
</gene>
<name>KPC1_DROME</name>
<proteinExistence type="evidence at transcript level"/>